<protein>
    <recommendedName>
        <fullName evidence="5">Natriuretic peptide BF131</fullName>
    </recommendedName>
</protein>
<keyword id="KW-1015">Disulfide bond</keyword>
<keyword id="KW-0382">Hypotensive agent</keyword>
<keyword id="KW-0964">Secreted</keyword>
<keyword id="KW-0732">Signal</keyword>
<keyword id="KW-0800">Toxin</keyword>
<keyword id="KW-0838">Vasoactive</keyword>
<keyword id="KW-0840">Vasodilator</keyword>
<name>VNP31_BUNFL</name>
<accession>D5J9S0</accession>
<proteinExistence type="evidence at transcript level"/>
<reference evidence="8" key="1">
    <citation type="journal article" date="2010" name="BMC Mol. Biol.">
        <title>Transcriptomic analysis of the venom gland of the red-headed krait (Bungarus flaviceps) using expressed sequence tags.</title>
        <authorList>
            <person name="Siang A.S."/>
            <person name="Doley R."/>
            <person name="Vonk F.J."/>
            <person name="Kini R.M."/>
        </authorList>
    </citation>
    <scope>NUCLEOTIDE SEQUENCE [MRNA]</scope>
    <source>
        <tissue>Venom gland</tissue>
    </source>
</reference>
<organism>
    <name type="scientific">Bungarus flaviceps flaviceps</name>
    <name type="common">Red-headed krait</name>
    <dbReference type="NCBI Taxonomy" id="8615"/>
    <lineage>
        <taxon>Eukaryota</taxon>
        <taxon>Metazoa</taxon>
        <taxon>Chordata</taxon>
        <taxon>Craniata</taxon>
        <taxon>Vertebrata</taxon>
        <taxon>Euteleostomi</taxon>
        <taxon>Lepidosauria</taxon>
        <taxon>Squamata</taxon>
        <taxon>Bifurcata</taxon>
        <taxon>Unidentata</taxon>
        <taxon>Episquamata</taxon>
        <taxon>Toxicofera</taxon>
        <taxon>Serpentes</taxon>
        <taxon>Colubroidea</taxon>
        <taxon>Elapidae</taxon>
        <taxon>Bungarinae</taxon>
        <taxon>Bungarus</taxon>
    </lineage>
</organism>
<dbReference type="EMBL" id="GU190821">
    <property type="protein sequence ID" value="ADF50041.1"/>
    <property type="molecule type" value="mRNA"/>
</dbReference>
<dbReference type="GO" id="GO:0005576">
    <property type="term" value="C:extracellular region"/>
    <property type="evidence" value="ECO:0007669"/>
    <property type="project" value="UniProtKB-SubCell"/>
</dbReference>
<dbReference type="GO" id="GO:0005179">
    <property type="term" value="F:hormone activity"/>
    <property type="evidence" value="ECO:0007669"/>
    <property type="project" value="InterPro"/>
</dbReference>
<dbReference type="GO" id="GO:0090729">
    <property type="term" value="F:toxin activity"/>
    <property type="evidence" value="ECO:0007669"/>
    <property type="project" value="UniProtKB-KW"/>
</dbReference>
<dbReference type="GO" id="GO:0008217">
    <property type="term" value="P:regulation of blood pressure"/>
    <property type="evidence" value="ECO:0007669"/>
    <property type="project" value="UniProtKB-KW"/>
</dbReference>
<dbReference type="GO" id="GO:0042311">
    <property type="term" value="P:vasodilation"/>
    <property type="evidence" value="ECO:0007669"/>
    <property type="project" value="UniProtKB-KW"/>
</dbReference>
<dbReference type="InterPro" id="IPR000663">
    <property type="entry name" value="Natr_peptide"/>
</dbReference>
<dbReference type="Pfam" id="PF00212">
    <property type="entry name" value="ANP"/>
    <property type="match status" value="1"/>
</dbReference>
<dbReference type="SMART" id="SM00183">
    <property type="entry name" value="NAT_PEP"/>
    <property type="match status" value="1"/>
</dbReference>
<evidence type="ECO:0000250" key="1">
    <source>
        <dbReference type="UniProtKB" id="D9IX97"/>
    </source>
</evidence>
<evidence type="ECO:0000250" key="2">
    <source>
        <dbReference type="UniProtKB" id="P28374"/>
    </source>
</evidence>
<evidence type="ECO:0000255" key="3"/>
<evidence type="ECO:0000256" key="4">
    <source>
        <dbReference type="SAM" id="MobiDB-lite"/>
    </source>
</evidence>
<evidence type="ECO:0000303" key="5">
    <source>
    </source>
</evidence>
<evidence type="ECO:0000305" key="6"/>
<evidence type="ECO:0000305" key="7">
    <source>
    </source>
</evidence>
<evidence type="ECO:0000312" key="8">
    <source>
        <dbReference type="EMBL" id="ADF50041.1"/>
    </source>
</evidence>
<comment type="function">
    <text evidence="1">Natriuretic peptide that dose-dependently induces the rapid relaxation of rat aortic strips phenylephrine-precontracted. Acts by stimulating cGMP production in a dose-dependent manner (by probably activating NPR1 and/or NPR2). May also show potent hypotensive effects.</text>
</comment>
<comment type="subcellular location">
    <subcellularLocation>
        <location evidence="7">Secreted</location>
    </subcellularLocation>
</comment>
<comment type="tissue specificity">
    <text evidence="7">Expressed by the venom gland.</text>
</comment>
<comment type="similarity">
    <text evidence="6">Belongs to the natriuretic peptide family.</text>
</comment>
<feature type="signal peptide" evidence="3">
    <location>
        <begin position="1"/>
        <end position="27"/>
    </location>
</feature>
<feature type="propeptide" id="PRO_0000403797" evidence="1">
    <location>
        <begin position="28"/>
        <end position="83"/>
    </location>
</feature>
<feature type="peptide" id="PRO_0000403798" description="Natriuretic peptide BF131" evidence="1">
    <location>
        <begin position="84"/>
        <end position="129"/>
    </location>
</feature>
<feature type="propeptide" id="PRO_0000403799" evidence="1">
    <location>
        <begin position="130"/>
        <end position="148"/>
    </location>
</feature>
<feature type="region of interest" description="Disordered" evidence="4">
    <location>
        <begin position="54"/>
        <end position="83"/>
    </location>
</feature>
<feature type="region of interest" description="Disordered" evidence="4">
    <location>
        <begin position="105"/>
        <end position="127"/>
    </location>
</feature>
<feature type="compositionally biased region" description="Basic and acidic residues" evidence="4">
    <location>
        <begin position="63"/>
        <end position="83"/>
    </location>
</feature>
<feature type="disulfide bond" evidence="2">
    <location>
        <begin position="94"/>
        <end position="110"/>
    </location>
</feature>
<sequence length="148" mass="15748">MVGPSRLAGGGLLLLLLLALLPLALDGKPAPPPQALPKDPAAASAAERIMRALLPDSKSSRPATDRMVHPEHQAGGGDTRRLQEPAKKGLLISCFDRRIDRISHTSDMGCRHRKDPPRAPPAAPSAAPLAVTWLIRDLRADSKQSRAA</sequence>